<proteinExistence type="inferred from homology"/>
<accession>Q92BX2</accession>
<name>IDI2_LISIN</name>
<organism>
    <name type="scientific">Listeria innocua serovar 6a (strain ATCC BAA-680 / CLIP 11262)</name>
    <dbReference type="NCBI Taxonomy" id="272626"/>
    <lineage>
        <taxon>Bacteria</taxon>
        <taxon>Bacillati</taxon>
        <taxon>Bacillota</taxon>
        <taxon>Bacilli</taxon>
        <taxon>Bacillales</taxon>
        <taxon>Listeriaceae</taxon>
        <taxon>Listeria</taxon>
    </lineage>
</organism>
<dbReference type="EC" id="5.3.3.2" evidence="1"/>
<dbReference type="EMBL" id="AL596168">
    <property type="protein sequence ID" value="CAC96651.1"/>
    <property type="molecule type" value="Genomic_DNA"/>
</dbReference>
<dbReference type="PIR" id="AC1610">
    <property type="entry name" value="AC1610"/>
</dbReference>
<dbReference type="RefSeq" id="WP_010991525.1">
    <property type="nucleotide sequence ID" value="NC_003212.1"/>
</dbReference>
<dbReference type="SMR" id="Q92BX2"/>
<dbReference type="STRING" id="272626.gene:17565751"/>
<dbReference type="GeneID" id="93234801"/>
<dbReference type="KEGG" id="lin:lin1420"/>
<dbReference type="eggNOG" id="COG1304">
    <property type="taxonomic scope" value="Bacteria"/>
</dbReference>
<dbReference type="HOGENOM" id="CLU_065515_0_0_9"/>
<dbReference type="OrthoDB" id="9795032at2"/>
<dbReference type="Proteomes" id="UP000002513">
    <property type="component" value="Chromosome"/>
</dbReference>
<dbReference type="GO" id="GO:0005737">
    <property type="term" value="C:cytoplasm"/>
    <property type="evidence" value="ECO:0007669"/>
    <property type="project" value="UniProtKB-SubCell"/>
</dbReference>
<dbReference type="GO" id="GO:0010181">
    <property type="term" value="F:FMN binding"/>
    <property type="evidence" value="ECO:0007669"/>
    <property type="project" value="UniProtKB-UniRule"/>
</dbReference>
<dbReference type="GO" id="GO:0004452">
    <property type="term" value="F:isopentenyl-diphosphate delta-isomerase activity"/>
    <property type="evidence" value="ECO:0007669"/>
    <property type="project" value="UniProtKB-UniRule"/>
</dbReference>
<dbReference type="GO" id="GO:0000287">
    <property type="term" value="F:magnesium ion binding"/>
    <property type="evidence" value="ECO:0007669"/>
    <property type="project" value="UniProtKB-UniRule"/>
</dbReference>
<dbReference type="GO" id="GO:0070402">
    <property type="term" value="F:NADPH binding"/>
    <property type="evidence" value="ECO:0007669"/>
    <property type="project" value="UniProtKB-UniRule"/>
</dbReference>
<dbReference type="GO" id="GO:0016491">
    <property type="term" value="F:oxidoreductase activity"/>
    <property type="evidence" value="ECO:0007669"/>
    <property type="project" value="InterPro"/>
</dbReference>
<dbReference type="GO" id="GO:0008299">
    <property type="term" value="P:isoprenoid biosynthetic process"/>
    <property type="evidence" value="ECO:0007669"/>
    <property type="project" value="UniProtKB-UniRule"/>
</dbReference>
<dbReference type="CDD" id="cd02811">
    <property type="entry name" value="IDI-2_FMN"/>
    <property type="match status" value="1"/>
</dbReference>
<dbReference type="Gene3D" id="3.20.20.70">
    <property type="entry name" value="Aldolase class I"/>
    <property type="match status" value="1"/>
</dbReference>
<dbReference type="HAMAP" id="MF_00354">
    <property type="entry name" value="Idi_2"/>
    <property type="match status" value="1"/>
</dbReference>
<dbReference type="InterPro" id="IPR013785">
    <property type="entry name" value="Aldolase_TIM"/>
</dbReference>
<dbReference type="InterPro" id="IPR000262">
    <property type="entry name" value="FMN-dep_DH"/>
</dbReference>
<dbReference type="InterPro" id="IPR011179">
    <property type="entry name" value="IPdP_isomerase"/>
</dbReference>
<dbReference type="NCBIfam" id="TIGR02151">
    <property type="entry name" value="IPP_isom_2"/>
    <property type="match status" value="1"/>
</dbReference>
<dbReference type="PANTHER" id="PTHR43665">
    <property type="entry name" value="ISOPENTENYL-DIPHOSPHATE DELTA-ISOMERASE"/>
    <property type="match status" value="1"/>
</dbReference>
<dbReference type="PANTHER" id="PTHR43665:SF1">
    <property type="entry name" value="ISOPENTENYL-DIPHOSPHATE DELTA-ISOMERASE"/>
    <property type="match status" value="1"/>
</dbReference>
<dbReference type="Pfam" id="PF01070">
    <property type="entry name" value="FMN_dh"/>
    <property type="match status" value="1"/>
</dbReference>
<dbReference type="PIRSF" id="PIRSF003314">
    <property type="entry name" value="IPP_isomerase"/>
    <property type="match status" value="1"/>
</dbReference>
<dbReference type="SUPFAM" id="SSF51395">
    <property type="entry name" value="FMN-linked oxidoreductases"/>
    <property type="match status" value="1"/>
</dbReference>
<reference key="1">
    <citation type="journal article" date="2001" name="Science">
        <title>Comparative genomics of Listeria species.</title>
        <authorList>
            <person name="Glaser P."/>
            <person name="Frangeul L."/>
            <person name="Buchrieser C."/>
            <person name="Rusniok C."/>
            <person name="Amend A."/>
            <person name="Baquero F."/>
            <person name="Berche P."/>
            <person name="Bloecker H."/>
            <person name="Brandt P."/>
            <person name="Chakraborty T."/>
            <person name="Charbit A."/>
            <person name="Chetouani F."/>
            <person name="Couve E."/>
            <person name="de Daruvar A."/>
            <person name="Dehoux P."/>
            <person name="Domann E."/>
            <person name="Dominguez-Bernal G."/>
            <person name="Duchaud E."/>
            <person name="Durant L."/>
            <person name="Dussurget O."/>
            <person name="Entian K.-D."/>
            <person name="Fsihi H."/>
            <person name="Garcia-del Portillo F."/>
            <person name="Garrido P."/>
            <person name="Gautier L."/>
            <person name="Goebel W."/>
            <person name="Gomez-Lopez N."/>
            <person name="Hain T."/>
            <person name="Hauf J."/>
            <person name="Jackson D."/>
            <person name="Jones L.-M."/>
            <person name="Kaerst U."/>
            <person name="Kreft J."/>
            <person name="Kuhn M."/>
            <person name="Kunst F."/>
            <person name="Kurapkat G."/>
            <person name="Madueno E."/>
            <person name="Maitournam A."/>
            <person name="Mata Vicente J."/>
            <person name="Ng E."/>
            <person name="Nedjari H."/>
            <person name="Nordsiek G."/>
            <person name="Novella S."/>
            <person name="de Pablos B."/>
            <person name="Perez-Diaz J.-C."/>
            <person name="Purcell R."/>
            <person name="Remmel B."/>
            <person name="Rose M."/>
            <person name="Schlueter T."/>
            <person name="Simoes N."/>
            <person name="Tierrez A."/>
            <person name="Vazquez-Boland J.-A."/>
            <person name="Voss H."/>
            <person name="Wehland J."/>
            <person name="Cossart P."/>
        </authorList>
    </citation>
    <scope>NUCLEOTIDE SEQUENCE [LARGE SCALE GENOMIC DNA]</scope>
    <source>
        <strain>ATCC BAA-680 / CLIP 11262</strain>
    </source>
</reference>
<protein>
    <recommendedName>
        <fullName evidence="1">Isopentenyl-diphosphate delta-isomerase</fullName>
        <shortName evidence="1">IPP isomerase</shortName>
        <ecNumber evidence="1">5.3.3.2</ecNumber>
    </recommendedName>
    <alternativeName>
        <fullName evidence="1">Isopentenyl diphosphate:dimethylallyl diphosphate isomerase</fullName>
    </alternativeName>
    <alternativeName>
        <fullName evidence="1">Isopentenyl pyrophosphate isomerase</fullName>
    </alternativeName>
    <alternativeName>
        <fullName evidence="1">Type 2 isopentenyl diphosphate isomerase</fullName>
        <shortName evidence="1">IDI-2</shortName>
    </alternativeName>
</protein>
<sequence length="358" mass="39230">MQKNDDLLRERRKDEHVALGVKQNENLAPSSLEDIQLIGTSIPRYNVKDIDLTTTFLGATVPFPFYINAMTGGSRHTKRINAELAEIAREVAIPMAVGSQSAALKNSSLIDTYQVVREVNPKGIILANVSPEVDIQDGIRAIEMLEADALQIHINPAQELVMQEGDRSFSHWLSRIEAYVKNSPVPVVVKEVGFGMTRETVKTLAEIGVTTVDLAGKGGTNFAQIENDRRRDQAYNFLLDWGISTGQALIDMQHADAPKIAYLASGGIRNPLDIVKALALGADSVGMAGQIISSLKKDGVSKTIEKLELWKEQLRGLFVLANAKNIAELKETPLIVSGELAKWGSLREIDLVQLANRK</sequence>
<gene>
    <name evidence="1" type="primary">fni</name>
    <name type="ordered locus">lin1420</name>
</gene>
<keyword id="KW-0963">Cytoplasm</keyword>
<keyword id="KW-0285">Flavoprotein</keyword>
<keyword id="KW-0288">FMN</keyword>
<keyword id="KW-0413">Isomerase</keyword>
<keyword id="KW-0414">Isoprene biosynthesis</keyword>
<keyword id="KW-0460">Magnesium</keyword>
<keyword id="KW-0479">Metal-binding</keyword>
<keyword id="KW-0521">NADP</keyword>
<evidence type="ECO:0000255" key="1">
    <source>
        <dbReference type="HAMAP-Rule" id="MF_00354"/>
    </source>
</evidence>
<feature type="chain" id="PRO_0000134412" description="Isopentenyl-diphosphate delta-isomerase">
    <location>
        <begin position="1"/>
        <end position="358"/>
    </location>
</feature>
<feature type="binding site" evidence="1">
    <location>
        <begin position="12"/>
        <end position="13"/>
    </location>
    <ligand>
        <name>substrate</name>
    </ligand>
</feature>
<feature type="binding site" evidence="1">
    <location>
        <begin position="69"/>
        <end position="71"/>
    </location>
    <ligand>
        <name>FMN</name>
        <dbReference type="ChEBI" id="CHEBI:58210"/>
    </ligand>
</feature>
<feature type="binding site" evidence="1">
    <location>
        <position position="99"/>
    </location>
    <ligand>
        <name>FMN</name>
        <dbReference type="ChEBI" id="CHEBI:58210"/>
    </ligand>
</feature>
<feature type="binding site" evidence="1">
    <location>
        <position position="128"/>
    </location>
    <ligand>
        <name>FMN</name>
        <dbReference type="ChEBI" id="CHEBI:58210"/>
    </ligand>
</feature>
<feature type="binding site" evidence="1">
    <location>
        <position position="158"/>
    </location>
    <ligand>
        <name>substrate</name>
    </ligand>
</feature>
<feature type="binding site" evidence="1">
    <location>
        <position position="159"/>
    </location>
    <ligand>
        <name>Mg(2+)</name>
        <dbReference type="ChEBI" id="CHEBI:18420"/>
    </ligand>
</feature>
<feature type="binding site" evidence="1">
    <location>
        <position position="190"/>
    </location>
    <ligand>
        <name>FMN</name>
        <dbReference type="ChEBI" id="CHEBI:58210"/>
    </ligand>
</feature>
<feature type="binding site" evidence="1">
    <location>
        <position position="220"/>
    </location>
    <ligand>
        <name>FMN</name>
        <dbReference type="ChEBI" id="CHEBI:58210"/>
    </ligand>
</feature>
<feature type="binding site" evidence="1">
    <location>
        <begin position="267"/>
        <end position="269"/>
    </location>
    <ligand>
        <name>FMN</name>
        <dbReference type="ChEBI" id="CHEBI:58210"/>
    </ligand>
</feature>
<feature type="binding site" evidence="1">
    <location>
        <begin position="288"/>
        <end position="289"/>
    </location>
    <ligand>
        <name>FMN</name>
        <dbReference type="ChEBI" id="CHEBI:58210"/>
    </ligand>
</feature>
<comment type="function">
    <text evidence="1">Involved in the biosynthesis of isoprenoids. Catalyzes the 1,3-allylic rearrangement of the homoallylic substrate isopentenyl (IPP) to its allylic isomer, dimethylallyl diphosphate (DMAPP).</text>
</comment>
<comment type="catalytic activity">
    <reaction evidence="1">
        <text>isopentenyl diphosphate = dimethylallyl diphosphate</text>
        <dbReference type="Rhea" id="RHEA:23284"/>
        <dbReference type="ChEBI" id="CHEBI:57623"/>
        <dbReference type="ChEBI" id="CHEBI:128769"/>
        <dbReference type="EC" id="5.3.3.2"/>
    </reaction>
</comment>
<comment type="cofactor">
    <cofactor evidence="1">
        <name>FMN</name>
        <dbReference type="ChEBI" id="CHEBI:58210"/>
    </cofactor>
</comment>
<comment type="cofactor">
    <cofactor evidence="1">
        <name>NADPH</name>
        <dbReference type="ChEBI" id="CHEBI:57783"/>
    </cofactor>
</comment>
<comment type="cofactor">
    <cofactor evidence="1">
        <name>Mg(2+)</name>
        <dbReference type="ChEBI" id="CHEBI:18420"/>
    </cofactor>
</comment>
<comment type="subunit">
    <text evidence="1">Homooctamer. Dimer of tetramers.</text>
</comment>
<comment type="subcellular location">
    <subcellularLocation>
        <location evidence="1">Cytoplasm</location>
    </subcellularLocation>
</comment>
<comment type="similarity">
    <text evidence="1">Belongs to the IPP isomerase type 2 family.</text>
</comment>